<feature type="chain" id="PRO_1000053315" description="ATP synthase gamma chain">
    <location>
        <begin position="1"/>
        <end position="288"/>
    </location>
</feature>
<protein>
    <recommendedName>
        <fullName evidence="1">ATP synthase gamma chain</fullName>
    </recommendedName>
    <alternativeName>
        <fullName evidence="1">ATP synthase F1 sector gamma subunit</fullName>
    </alternativeName>
    <alternativeName>
        <fullName evidence="1">F-ATPase gamma subunit</fullName>
    </alternativeName>
</protein>
<gene>
    <name evidence="1" type="primary">atpG</name>
    <name type="ordered locus">A1E_05110</name>
</gene>
<proteinExistence type="inferred from homology"/>
<evidence type="ECO:0000255" key="1">
    <source>
        <dbReference type="HAMAP-Rule" id="MF_00815"/>
    </source>
</evidence>
<comment type="function">
    <text evidence="1">Produces ATP from ADP in the presence of a proton gradient across the membrane. The gamma chain is believed to be important in regulating ATPase activity and the flow of protons through the CF(0) complex.</text>
</comment>
<comment type="subunit">
    <text evidence="1">F-type ATPases have 2 components, CF(1) - the catalytic core - and CF(0) - the membrane proton channel. CF(1) has five subunits: alpha(3), beta(3), gamma(1), delta(1), epsilon(1). CF(0) has three main subunits: a, b and c.</text>
</comment>
<comment type="subcellular location">
    <subcellularLocation>
        <location evidence="1">Cell inner membrane</location>
        <topology evidence="1">Peripheral membrane protein</topology>
    </subcellularLocation>
</comment>
<comment type="similarity">
    <text evidence="1">Belongs to the ATPase gamma chain family.</text>
</comment>
<keyword id="KW-0066">ATP synthesis</keyword>
<keyword id="KW-0997">Cell inner membrane</keyword>
<keyword id="KW-1003">Cell membrane</keyword>
<keyword id="KW-0139">CF(1)</keyword>
<keyword id="KW-0375">Hydrogen ion transport</keyword>
<keyword id="KW-0406">Ion transport</keyword>
<keyword id="KW-0472">Membrane</keyword>
<keyword id="KW-0813">Transport</keyword>
<reference key="1">
    <citation type="submission" date="2007-09" db="EMBL/GenBank/DDBJ databases">
        <title>Complete genome sequence of Rickettsia canadensis.</title>
        <authorList>
            <person name="Madan A."/>
            <person name="Fahey J."/>
            <person name="Helton E."/>
            <person name="Ketteman M."/>
            <person name="Madan A."/>
            <person name="Rodrigues S."/>
            <person name="Sanchez A."/>
            <person name="Whiting M."/>
            <person name="Dasch G."/>
            <person name="Eremeeva M."/>
        </authorList>
    </citation>
    <scope>NUCLEOTIDE SEQUENCE [LARGE SCALE GENOMIC DNA]</scope>
    <source>
        <strain>McKiel</strain>
    </source>
</reference>
<accession>A8F005</accession>
<dbReference type="EMBL" id="CP000409">
    <property type="protein sequence ID" value="ABV73938.1"/>
    <property type="molecule type" value="Genomic_DNA"/>
</dbReference>
<dbReference type="RefSeq" id="WP_012149133.1">
    <property type="nucleotide sequence ID" value="NC_009879.1"/>
</dbReference>
<dbReference type="SMR" id="A8F005"/>
<dbReference type="STRING" id="293613.A1E_05110"/>
<dbReference type="KEGG" id="rcm:A1E_05110"/>
<dbReference type="eggNOG" id="COG0224">
    <property type="taxonomic scope" value="Bacteria"/>
</dbReference>
<dbReference type="HOGENOM" id="CLU_050669_0_1_5"/>
<dbReference type="Proteomes" id="UP000007056">
    <property type="component" value="Chromosome"/>
</dbReference>
<dbReference type="GO" id="GO:0005886">
    <property type="term" value="C:plasma membrane"/>
    <property type="evidence" value="ECO:0007669"/>
    <property type="project" value="UniProtKB-SubCell"/>
</dbReference>
<dbReference type="GO" id="GO:0045259">
    <property type="term" value="C:proton-transporting ATP synthase complex"/>
    <property type="evidence" value="ECO:0007669"/>
    <property type="project" value="UniProtKB-KW"/>
</dbReference>
<dbReference type="GO" id="GO:0005524">
    <property type="term" value="F:ATP binding"/>
    <property type="evidence" value="ECO:0007669"/>
    <property type="project" value="UniProtKB-UniRule"/>
</dbReference>
<dbReference type="GO" id="GO:0046933">
    <property type="term" value="F:proton-transporting ATP synthase activity, rotational mechanism"/>
    <property type="evidence" value="ECO:0007669"/>
    <property type="project" value="UniProtKB-UniRule"/>
</dbReference>
<dbReference type="GO" id="GO:0042777">
    <property type="term" value="P:proton motive force-driven plasma membrane ATP synthesis"/>
    <property type="evidence" value="ECO:0007669"/>
    <property type="project" value="UniProtKB-UniRule"/>
</dbReference>
<dbReference type="CDD" id="cd12151">
    <property type="entry name" value="F1-ATPase_gamma"/>
    <property type="match status" value="1"/>
</dbReference>
<dbReference type="Gene3D" id="3.40.1380.10">
    <property type="match status" value="1"/>
</dbReference>
<dbReference type="Gene3D" id="1.10.287.80">
    <property type="entry name" value="ATP synthase, gamma subunit, helix hairpin domain"/>
    <property type="match status" value="1"/>
</dbReference>
<dbReference type="HAMAP" id="MF_00815">
    <property type="entry name" value="ATP_synth_gamma_bact"/>
    <property type="match status" value="1"/>
</dbReference>
<dbReference type="InterPro" id="IPR035968">
    <property type="entry name" value="ATP_synth_F1_ATPase_gsu"/>
</dbReference>
<dbReference type="InterPro" id="IPR000131">
    <property type="entry name" value="ATP_synth_F1_gsu"/>
</dbReference>
<dbReference type="NCBIfam" id="TIGR01146">
    <property type="entry name" value="ATPsyn_F1gamma"/>
    <property type="match status" value="1"/>
</dbReference>
<dbReference type="PANTHER" id="PTHR11693">
    <property type="entry name" value="ATP SYNTHASE GAMMA CHAIN"/>
    <property type="match status" value="1"/>
</dbReference>
<dbReference type="PANTHER" id="PTHR11693:SF22">
    <property type="entry name" value="ATP SYNTHASE SUBUNIT GAMMA, MITOCHONDRIAL"/>
    <property type="match status" value="1"/>
</dbReference>
<dbReference type="Pfam" id="PF00231">
    <property type="entry name" value="ATP-synt"/>
    <property type="match status" value="1"/>
</dbReference>
<dbReference type="PRINTS" id="PR00126">
    <property type="entry name" value="ATPASEGAMMA"/>
</dbReference>
<dbReference type="SUPFAM" id="SSF52943">
    <property type="entry name" value="ATP synthase (F1-ATPase), gamma subunit"/>
    <property type="match status" value="1"/>
</dbReference>
<sequence>MSNLKQLRTRIKSVKSTQKITKAMQLVSASKMTKIKSQIANSNFYIEAISKMMSAILAIDMYELSIEGQKFFNTVPNKVNLLIVMTSQRGLCGTFNYNIIKQVKNDIKDLENKGKQIKLIIIGKKGYEALKRQYANYIDSYFELSKIHDEKLILQVKQKIMSAAYNLEVSNCVIYFNKFKNAMTQIMTRQQILPVEKSKDDSTVKKYHYEYEGETLISNLISLYVNSQINYALLQNRASEEGARMTAMENATNNANDLISKLVLKLNRSRQAIITKELIEIIAGSEAV</sequence>
<name>ATPG_RICCK</name>
<organism>
    <name type="scientific">Rickettsia canadensis (strain McKiel)</name>
    <dbReference type="NCBI Taxonomy" id="293613"/>
    <lineage>
        <taxon>Bacteria</taxon>
        <taxon>Pseudomonadati</taxon>
        <taxon>Pseudomonadota</taxon>
        <taxon>Alphaproteobacteria</taxon>
        <taxon>Rickettsiales</taxon>
        <taxon>Rickettsiaceae</taxon>
        <taxon>Rickettsieae</taxon>
        <taxon>Rickettsia</taxon>
        <taxon>belli group</taxon>
    </lineage>
</organism>